<accession>Q9UKG1</accession>
<accession>Q9P2B9</accession>
<protein>
    <recommendedName>
        <fullName evidence="24">DCC-interacting protein 13-alpha</fullName>
        <shortName evidence="23">Dip13-alpha</shortName>
    </recommendedName>
    <alternativeName>
        <fullName evidence="24">Adapter protein containing PH domain, PTB domain and leucine zipper motif 1</fullName>
    </alternativeName>
</protein>
<sequence>MPGIDKLPIEETLEDSPQTRSLLGVFEEDATAISNYMNQLYQAMHRIYDAQNELSAATHLTSKLLKEYEKQRFPLGGDDEVMSSTLQQFSKVIDELSSCHAVLSTQLADAMMFPITQFKERDLKEILTLKEVFQIASNDHDAAINRYSRLSKKRENDKVKYEVTEDVYTSRKKQHQTMMHYFCALNTLQYKKKIALLEPLLGYMQAQISFFKMGSENLNEQLEEFLANIGTSVQNVRREMDSDIETMQQTIEDLEVASDPLYVPDPDPTKFPVNRNLTRKAGYLNARNKTGLVSSTWDRQFYFTQGGNLMSQARGDVAGGLAMDIDNCSVMAVDCEDRRYCFQITSFDGKKSSILQAESKKDHEEWICTINNISKQIYLSENPEETAARVNQSALEAVTPSPSFQQRHESLRPAAGQSRPPTARTSSSGSLGSESTNLAALSLDSLVAPDTPIQFDIISPVCEDQPGQAKAFGQGGRRTNPFGESGGSTKSETEDSILHQLFIVRFLGSMEVKSDDHPDVVYETMRQILAARAIHNIFRMTESHLLVTCDCLKLIDPQTQVTRLTFPLPCVVLYATHQENKRLFGFVLRTSSGRSESNLSSVCYIFESNNEGEKICDSVGLAKQIALHAELDRRASEKQKEIERVKEKQQKELNKQKQIEKDLEEQSRLIAASSRPNQASSEGQFVVLSSSQSEESDLGEGGKKRESEA</sequence>
<proteinExistence type="evidence at protein level"/>
<evidence type="ECO:0000250" key="1">
    <source>
        <dbReference type="UniProtKB" id="Q8K3H0"/>
    </source>
</evidence>
<evidence type="ECO:0000255" key="2"/>
<evidence type="ECO:0000255" key="3">
    <source>
        <dbReference type="PROSITE-ProRule" id="PRU00145"/>
    </source>
</evidence>
<evidence type="ECO:0000255" key="4">
    <source>
        <dbReference type="PROSITE-ProRule" id="PRU00148"/>
    </source>
</evidence>
<evidence type="ECO:0000255" key="5">
    <source>
        <dbReference type="PROSITE-ProRule" id="PRU00361"/>
    </source>
</evidence>
<evidence type="ECO:0000256" key="6">
    <source>
        <dbReference type="SAM" id="MobiDB-lite"/>
    </source>
</evidence>
<evidence type="ECO:0000269" key="7">
    <source>
    </source>
</evidence>
<evidence type="ECO:0000269" key="8">
    <source>
    </source>
</evidence>
<evidence type="ECO:0000269" key="9">
    <source>
    </source>
</evidence>
<evidence type="ECO:0000269" key="10">
    <source>
    </source>
</evidence>
<evidence type="ECO:0000269" key="11">
    <source>
    </source>
</evidence>
<evidence type="ECO:0000269" key="12">
    <source>
    </source>
</evidence>
<evidence type="ECO:0000269" key="13">
    <source>
    </source>
</evidence>
<evidence type="ECO:0000269" key="14">
    <source>
    </source>
</evidence>
<evidence type="ECO:0000269" key="15">
    <source>
    </source>
</evidence>
<evidence type="ECO:0000269" key="16">
    <source>
    </source>
</evidence>
<evidence type="ECO:0000269" key="17">
    <source>
    </source>
</evidence>
<evidence type="ECO:0000269" key="18">
    <source>
    </source>
</evidence>
<evidence type="ECO:0000269" key="19">
    <source>
    </source>
</evidence>
<evidence type="ECO:0000269" key="20">
    <source>
    </source>
</evidence>
<evidence type="ECO:0000269" key="21">
    <source>
    </source>
</evidence>
<evidence type="ECO:0000269" key="22">
    <source>
    </source>
</evidence>
<evidence type="ECO:0000303" key="23">
    <source>
    </source>
</evidence>
<evidence type="ECO:0000305" key="24"/>
<evidence type="ECO:0000312" key="25">
    <source>
        <dbReference type="EMBL" id="AAF04012.1"/>
    </source>
</evidence>
<evidence type="ECO:0000312" key="26">
    <source>
        <dbReference type="EMBL" id="AAH28599.1"/>
    </source>
</evidence>
<evidence type="ECO:0000312" key="27">
    <source>
        <dbReference type="EMBL" id="AAL17835.1"/>
    </source>
</evidence>
<evidence type="ECO:0000312" key="28">
    <source>
        <dbReference type="EMBL" id="BAA92666.2"/>
    </source>
</evidence>
<evidence type="ECO:0000312" key="29">
    <source>
        <dbReference type="HGNC" id="HGNC:24035"/>
    </source>
</evidence>
<evidence type="ECO:0007744" key="30">
    <source>
    </source>
</evidence>
<evidence type="ECO:0007744" key="31">
    <source>
    </source>
</evidence>
<evidence type="ECO:0007829" key="32">
    <source>
        <dbReference type="PDB" id="2EJ8"/>
    </source>
</evidence>
<evidence type="ECO:0007829" key="33">
    <source>
        <dbReference type="PDB" id="2ELA"/>
    </source>
</evidence>
<evidence type="ECO:0007829" key="34">
    <source>
        <dbReference type="PDB" id="2ELB"/>
    </source>
</evidence>
<evidence type="ECO:0007829" key="35">
    <source>
        <dbReference type="PDB" id="2Q12"/>
    </source>
</evidence>
<evidence type="ECO:0007829" key="36">
    <source>
        <dbReference type="PDB" id="2Q13"/>
    </source>
</evidence>
<evidence type="ECO:0007829" key="37">
    <source>
        <dbReference type="PDB" id="5C5B"/>
    </source>
</evidence>
<name>DP13A_HUMAN</name>
<keyword id="KW-0002">3D-structure</keyword>
<keyword id="KW-0131">Cell cycle</keyword>
<keyword id="KW-0966">Cell projection</keyword>
<keyword id="KW-0175">Coiled coil</keyword>
<keyword id="KW-0963">Cytoplasm</keyword>
<keyword id="KW-0968">Cytoplasmic vesicle</keyword>
<keyword id="KW-0219">Diabetes mellitus</keyword>
<keyword id="KW-0225">Disease variant</keyword>
<keyword id="KW-0967">Endosome</keyword>
<keyword id="KW-0472">Membrane</keyword>
<keyword id="KW-0539">Nucleus</keyword>
<keyword id="KW-0597">Phosphoprotein</keyword>
<keyword id="KW-1267">Proteomics identification</keyword>
<keyword id="KW-1185">Reference proteome</keyword>
<feature type="chain" id="PRO_0000079985" description="DCC-interacting protein 13-alpha">
    <location>
        <begin position="1"/>
        <end position="709"/>
    </location>
</feature>
<feature type="domain" description="BAR" evidence="5">
    <location>
        <begin position="3"/>
        <end position="268"/>
    </location>
</feature>
<feature type="domain" description="PH" evidence="3">
    <location>
        <begin position="277"/>
        <end position="375"/>
    </location>
</feature>
<feature type="domain" description="PID" evidence="4">
    <location>
        <begin position="496"/>
        <end position="656"/>
    </location>
</feature>
<feature type="region of interest" description="Required for RAB5A binding">
    <location>
        <begin position="1"/>
        <end position="428"/>
    </location>
</feature>
<feature type="region of interest" description="Disordered" evidence="6">
    <location>
        <begin position="397"/>
        <end position="434"/>
    </location>
</feature>
<feature type="region of interest" description="Disordered" evidence="6">
    <location>
        <begin position="467"/>
        <end position="491"/>
    </location>
</feature>
<feature type="region of interest" description="Disordered" evidence="6">
    <location>
        <begin position="645"/>
        <end position="709"/>
    </location>
</feature>
<feature type="coiled-coil region" evidence="2">
    <location>
        <begin position="215"/>
        <end position="259"/>
    </location>
</feature>
<feature type="coiled-coil region" evidence="2">
    <location>
        <begin position="621"/>
        <end position="673"/>
    </location>
</feature>
<feature type="short sequence motif" description="F&amp;H">
    <location>
        <begin position="403"/>
        <end position="414"/>
    </location>
</feature>
<feature type="compositionally biased region" description="Basic and acidic residues" evidence="6">
    <location>
        <begin position="645"/>
        <end position="667"/>
    </location>
</feature>
<feature type="compositionally biased region" description="Polar residues" evidence="6">
    <location>
        <begin position="674"/>
        <end position="693"/>
    </location>
</feature>
<feature type="compositionally biased region" description="Basic and acidic residues" evidence="6">
    <location>
        <begin position="700"/>
        <end position="709"/>
    </location>
</feature>
<feature type="modified residue" description="Phosphothreonine" evidence="30">
    <location>
        <position position="399"/>
    </location>
</feature>
<feature type="modified residue" description="Phosphoserine" evidence="31">
    <location>
        <position position="401"/>
    </location>
</feature>
<feature type="modified residue" description="Phosphoserine; by PKA" evidence="12">
    <location>
        <position position="410"/>
    </location>
</feature>
<feature type="modified residue" description="Phosphoserine" evidence="1">
    <location>
        <position position="693"/>
    </location>
</feature>
<feature type="modified residue" description="Phosphoserine" evidence="1">
    <location>
        <position position="696"/>
    </location>
</feature>
<feature type="sequence variant" id="VAR_075857" description="In MODY14; no effect on protein abundance; loss of function in insulin receptor signaling pathway; dbSNP:rs796065047." evidence="21">
    <original>D</original>
    <variation>N</variation>
    <location>
        <position position="94"/>
    </location>
</feature>
<feature type="sequence variant" id="VAR_050958" description="In dbSNP:rs4381906.">
    <original>A</original>
    <variation>V</variation>
    <location>
        <position position="108"/>
    </location>
</feature>
<feature type="sequence variant" id="VAR_035909" description="In a breast cancer sample; somatic mutation." evidence="10">
    <original>E</original>
    <variation>Q</variation>
    <location>
        <position position="643"/>
    </location>
</feature>
<feature type="sequence variant" id="VAR_050959" description="In dbSNP:rs11544593.">
    <original>E</original>
    <variation>G</variation>
    <location>
        <position position="700"/>
    </location>
</feature>
<feature type="mutagenesis site" description="Decreased interaction with OCRL." evidence="12">
    <original>S</original>
    <variation>D</variation>
    <location>
        <position position="410"/>
    </location>
</feature>
<feature type="helix" evidence="36">
    <location>
        <begin position="9"/>
        <end position="11"/>
    </location>
</feature>
<feature type="turn" evidence="36">
    <location>
        <begin position="12"/>
        <end position="14"/>
    </location>
</feature>
<feature type="helix" evidence="35">
    <location>
        <begin position="16"/>
        <end position="66"/>
    </location>
</feature>
<feature type="helix" evidence="35">
    <location>
        <begin position="67"/>
        <end position="70"/>
    </location>
</feature>
<feature type="helix" evidence="35">
    <location>
        <begin position="81"/>
        <end position="110"/>
    </location>
</feature>
<feature type="helix" evidence="35">
    <location>
        <begin position="112"/>
        <end position="120"/>
    </location>
</feature>
<feature type="helix" evidence="35">
    <location>
        <begin position="122"/>
        <end position="151"/>
    </location>
</feature>
<feature type="strand" evidence="36">
    <location>
        <begin position="152"/>
        <end position="154"/>
    </location>
</feature>
<feature type="helix" evidence="35">
    <location>
        <begin position="157"/>
        <end position="217"/>
    </location>
</feature>
<feature type="helix" evidence="35">
    <location>
        <begin position="220"/>
        <end position="257"/>
    </location>
</feature>
<feature type="helix" evidence="36">
    <location>
        <begin position="259"/>
        <end position="261"/>
    </location>
</feature>
<feature type="strand" evidence="36">
    <location>
        <begin position="262"/>
        <end position="265"/>
    </location>
</feature>
<feature type="turn" evidence="36">
    <location>
        <begin position="268"/>
        <end position="270"/>
    </location>
</feature>
<feature type="strand" evidence="36">
    <location>
        <begin position="281"/>
        <end position="286"/>
    </location>
</feature>
<feature type="strand" evidence="36">
    <location>
        <begin position="298"/>
        <end position="305"/>
    </location>
</feature>
<feature type="strand" evidence="36">
    <location>
        <begin position="308"/>
        <end position="312"/>
    </location>
</feature>
<feature type="strand" evidence="36">
    <location>
        <begin position="320"/>
        <end position="324"/>
    </location>
</feature>
<feature type="strand" evidence="36">
    <location>
        <begin position="329"/>
        <end position="333"/>
    </location>
</feature>
<feature type="strand" evidence="36">
    <location>
        <begin position="339"/>
        <end position="345"/>
    </location>
</feature>
<feature type="strand" evidence="34">
    <location>
        <begin position="348"/>
        <end position="350"/>
    </location>
</feature>
<feature type="strand" evidence="37">
    <location>
        <begin position="354"/>
        <end position="356"/>
    </location>
</feature>
<feature type="helix" evidence="36">
    <location>
        <begin position="360"/>
        <end position="374"/>
    </location>
</feature>
<feature type="strand" evidence="32">
    <location>
        <begin position="499"/>
        <end position="512"/>
    </location>
</feature>
<feature type="helix" evidence="32">
    <location>
        <begin position="519"/>
        <end position="534"/>
    </location>
</feature>
<feature type="strand" evidence="32">
    <location>
        <begin position="542"/>
        <end position="555"/>
    </location>
</feature>
<feature type="turn" evidence="32">
    <location>
        <begin position="557"/>
        <end position="559"/>
    </location>
</feature>
<feature type="strand" evidence="32">
    <location>
        <begin position="562"/>
        <end position="567"/>
    </location>
</feature>
<feature type="helix" evidence="32">
    <location>
        <begin position="568"/>
        <end position="570"/>
    </location>
</feature>
<feature type="strand" evidence="32">
    <location>
        <begin position="571"/>
        <end position="577"/>
    </location>
</feature>
<feature type="strand" evidence="32">
    <location>
        <begin position="580"/>
        <end position="590"/>
    </location>
</feature>
<feature type="strand" evidence="32">
    <location>
        <begin position="600"/>
        <end position="610"/>
    </location>
</feature>
<feature type="helix" evidence="32">
    <location>
        <begin position="612"/>
        <end position="629"/>
    </location>
</feature>
<feature type="helix" evidence="33">
    <location>
        <begin position="634"/>
        <end position="643"/>
    </location>
</feature>
<dbReference type="EMBL" id="AF169797">
    <property type="protein sequence ID" value="AAF04012.1"/>
    <property type="molecule type" value="mRNA"/>
</dbReference>
<dbReference type="EMBL" id="AF424738">
    <property type="protein sequence ID" value="AAL17835.1"/>
    <property type="molecule type" value="mRNA"/>
</dbReference>
<dbReference type="EMBL" id="AB037849">
    <property type="protein sequence ID" value="BAA92666.2"/>
    <property type="molecule type" value="mRNA"/>
</dbReference>
<dbReference type="EMBL" id="BC028599">
    <property type="protein sequence ID" value="AAH28599.1"/>
    <property type="molecule type" value="mRNA"/>
</dbReference>
<dbReference type="CCDS" id="CCDS2882.1"/>
<dbReference type="RefSeq" id="NP_036228.1">
    <property type="nucleotide sequence ID" value="NM_012096.3"/>
</dbReference>
<dbReference type="PDB" id="2EJ8">
    <property type="method" value="X-ray"/>
    <property type="resolution" value="1.84 A"/>
    <property type="chains" value="A/B=492-644"/>
</dbReference>
<dbReference type="PDB" id="2ELA">
    <property type="method" value="X-ray"/>
    <property type="resolution" value="2.00 A"/>
    <property type="chains" value="A/B=493-646"/>
</dbReference>
<dbReference type="PDB" id="2ELB">
    <property type="method" value="X-ray"/>
    <property type="resolution" value="2.60 A"/>
    <property type="chains" value="A=1-376"/>
</dbReference>
<dbReference type="PDB" id="2Q12">
    <property type="method" value="X-ray"/>
    <property type="resolution" value="1.79 A"/>
    <property type="chains" value="A=5-265"/>
</dbReference>
<dbReference type="PDB" id="2Q13">
    <property type="method" value="X-ray"/>
    <property type="resolution" value="2.05 A"/>
    <property type="chains" value="A=5-385"/>
</dbReference>
<dbReference type="PDB" id="2Z0N">
    <property type="method" value="X-ray"/>
    <property type="resolution" value="1.95 A"/>
    <property type="chains" value="A=1-275"/>
</dbReference>
<dbReference type="PDB" id="2Z0O">
    <property type="method" value="X-ray"/>
    <property type="resolution" value="2.58 A"/>
    <property type="chains" value="A=1-385"/>
</dbReference>
<dbReference type="PDB" id="5C5B">
    <property type="method" value="X-ray"/>
    <property type="resolution" value="2.90 A"/>
    <property type="chains" value="A/C=5-375"/>
</dbReference>
<dbReference type="PDBsum" id="2EJ8"/>
<dbReference type="PDBsum" id="2ELA"/>
<dbReference type="PDBsum" id="2ELB"/>
<dbReference type="PDBsum" id="2Q12"/>
<dbReference type="PDBsum" id="2Q13"/>
<dbReference type="PDBsum" id="2Z0N"/>
<dbReference type="PDBsum" id="2Z0O"/>
<dbReference type="PDBsum" id="5C5B"/>
<dbReference type="SMR" id="Q9UKG1"/>
<dbReference type="BioGRID" id="117522">
    <property type="interactions" value="184"/>
</dbReference>
<dbReference type="CORUM" id="Q9UKG1"/>
<dbReference type="DIP" id="DIP-29322N"/>
<dbReference type="ELM" id="Q9UKG1"/>
<dbReference type="FunCoup" id="Q9UKG1">
    <property type="interactions" value="3018"/>
</dbReference>
<dbReference type="IntAct" id="Q9UKG1">
    <property type="interactions" value="148"/>
</dbReference>
<dbReference type="MINT" id="Q9UKG1"/>
<dbReference type="STRING" id="9606.ENSP00000288266"/>
<dbReference type="MoonDB" id="Q9UKG1">
    <property type="type" value="Curated"/>
</dbReference>
<dbReference type="GlyGen" id="Q9UKG1">
    <property type="glycosylation" value="3 sites, 1 O-linked glycan (3 sites)"/>
</dbReference>
<dbReference type="iPTMnet" id="Q9UKG1"/>
<dbReference type="PhosphoSitePlus" id="Q9UKG1"/>
<dbReference type="SwissPalm" id="Q9UKG1"/>
<dbReference type="BioMuta" id="APPL1"/>
<dbReference type="DMDM" id="61213025"/>
<dbReference type="jPOST" id="Q9UKG1"/>
<dbReference type="MassIVE" id="Q9UKG1"/>
<dbReference type="PaxDb" id="9606-ENSP00000288266"/>
<dbReference type="PeptideAtlas" id="Q9UKG1"/>
<dbReference type="ProteomicsDB" id="84785"/>
<dbReference type="Pumba" id="Q9UKG1"/>
<dbReference type="Antibodypedia" id="2775">
    <property type="antibodies" value="383 antibodies from 36 providers"/>
</dbReference>
<dbReference type="DNASU" id="26060"/>
<dbReference type="Ensembl" id="ENST00000288266.8">
    <property type="protein sequence ID" value="ENSP00000288266.3"/>
    <property type="gene ID" value="ENSG00000157500.12"/>
</dbReference>
<dbReference type="Ensembl" id="ENST00000650354.1">
    <property type="protein sequence ID" value="ENSP00000498115.1"/>
    <property type="gene ID" value="ENSG00000157500.12"/>
</dbReference>
<dbReference type="GeneID" id="26060"/>
<dbReference type="KEGG" id="hsa:26060"/>
<dbReference type="MANE-Select" id="ENST00000288266.8">
    <property type="protein sequence ID" value="ENSP00000288266.3"/>
    <property type="RefSeq nucleotide sequence ID" value="NM_012096.3"/>
    <property type="RefSeq protein sequence ID" value="NP_036228.1"/>
</dbReference>
<dbReference type="UCSC" id="uc003dio.4">
    <property type="organism name" value="human"/>
</dbReference>
<dbReference type="AGR" id="HGNC:24035"/>
<dbReference type="CTD" id="26060"/>
<dbReference type="DisGeNET" id="26060"/>
<dbReference type="GeneCards" id="APPL1"/>
<dbReference type="GeneReviews" id="APPL1"/>
<dbReference type="HGNC" id="HGNC:24035">
    <property type="gene designation" value="APPL1"/>
</dbReference>
<dbReference type="HPA" id="ENSG00000157500">
    <property type="expression patterns" value="Low tissue specificity"/>
</dbReference>
<dbReference type="MalaCards" id="APPL1"/>
<dbReference type="MIM" id="604299">
    <property type="type" value="gene"/>
</dbReference>
<dbReference type="MIM" id="616511">
    <property type="type" value="phenotype"/>
</dbReference>
<dbReference type="neXtProt" id="NX_Q9UKG1"/>
<dbReference type="OpenTargets" id="ENSG00000157500"/>
<dbReference type="Orphanet" id="552">
    <property type="disease" value="MODY"/>
</dbReference>
<dbReference type="PharmGKB" id="PA162376755"/>
<dbReference type="VEuPathDB" id="HostDB:ENSG00000157500"/>
<dbReference type="eggNOG" id="KOG0521">
    <property type="taxonomic scope" value="Eukaryota"/>
</dbReference>
<dbReference type="eggNOG" id="KOG3536">
    <property type="taxonomic scope" value="Eukaryota"/>
</dbReference>
<dbReference type="GeneTree" id="ENSGT00940000156624"/>
<dbReference type="HOGENOM" id="CLU_025935_0_0_1"/>
<dbReference type="InParanoid" id="Q9UKG1"/>
<dbReference type="OMA" id="CFQISAF"/>
<dbReference type="OrthoDB" id="10070851at2759"/>
<dbReference type="PAN-GO" id="Q9UKG1">
    <property type="GO annotations" value="4 GO annotations based on evolutionary models"/>
</dbReference>
<dbReference type="PhylomeDB" id="Q9UKG1"/>
<dbReference type="TreeFam" id="TF328669"/>
<dbReference type="PathwayCommons" id="Q9UKG1"/>
<dbReference type="Reactome" id="R-HSA-418889">
    <property type="pathway name" value="Caspase activation via Dependence Receptors in the absence of ligand"/>
</dbReference>
<dbReference type="SignaLink" id="Q9UKG1"/>
<dbReference type="SIGNOR" id="Q9UKG1"/>
<dbReference type="BioGRID-ORCS" id="26060">
    <property type="hits" value="14 hits in 1156 CRISPR screens"/>
</dbReference>
<dbReference type="CD-CODE" id="FB4E32DD">
    <property type="entry name" value="Presynaptic clusters and postsynaptic densities"/>
</dbReference>
<dbReference type="ChiTaRS" id="APPL1">
    <property type="organism name" value="human"/>
</dbReference>
<dbReference type="EvolutionaryTrace" id="Q9UKG1"/>
<dbReference type="GeneWiki" id="APPL1"/>
<dbReference type="GenomeRNAi" id="26060"/>
<dbReference type="Pharos" id="Q9UKG1">
    <property type="development level" value="Tbio"/>
</dbReference>
<dbReference type="PRO" id="PR:Q9UKG1"/>
<dbReference type="Proteomes" id="UP000005640">
    <property type="component" value="Chromosome 3"/>
</dbReference>
<dbReference type="RNAct" id="Q9UKG1">
    <property type="molecule type" value="protein"/>
</dbReference>
<dbReference type="Bgee" id="ENSG00000157500">
    <property type="expression patterns" value="Expressed in calcaneal tendon and 197 other cell types or tissues"/>
</dbReference>
<dbReference type="ExpressionAtlas" id="Q9UKG1">
    <property type="expression patterns" value="baseline and differential"/>
</dbReference>
<dbReference type="GO" id="GO:0015629">
    <property type="term" value="C:actin cytoskeleton"/>
    <property type="evidence" value="ECO:0000314"/>
    <property type="project" value="HPA"/>
</dbReference>
<dbReference type="GO" id="GO:0005737">
    <property type="term" value="C:cytoplasm"/>
    <property type="evidence" value="ECO:0000314"/>
    <property type="project" value="UniProtKB"/>
</dbReference>
<dbReference type="GO" id="GO:0031410">
    <property type="term" value="C:cytoplasmic vesicle"/>
    <property type="evidence" value="ECO:0000314"/>
    <property type="project" value="UniProtKB"/>
</dbReference>
<dbReference type="GO" id="GO:0005829">
    <property type="term" value="C:cytosol"/>
    <property type="evidence" value="ECO:0000314"/>
    <property type="project" value="BHF-UCL"/>
</dbReference>
<dbReference type="GO" id="GO:0005769">
    <property type="term" value="C:early endosome"/>
    <property type="evidence" value="ECO:0000314"/>
    <property type="project" value="UniProtKB"/>
</dbReference>
<dbReference type="GO" id="GO:0031901">
    <property type="term" value="C:early endosome membrane"/>
    <property type="evidence" value="ECO:0007669"/>
    <property type="project" value="UniProtKB-SubCell"/>
</dbReference>
<dbReference type="GO" id="GO:0032009">
    <property type="term" value="C:early phagosome"/>
    <property type="evidence" value="ECO:0000250"/>
    <property type="project" value="UniProtKB"/>
</dbReference>
<dbReference type="GO" id="GO:0005768">
    <property type="term" value="C:endosome"/>
    <property type="evidence" value="ECO:0000314"/>
    <property type="project" value="UniProtKB"/>
</dbReference>
<dbReference type="GO" id="GO:0010008">
    <property type="term" value="C:endosome membrane"/>
    <property type="evidence" value="ECO:0000314"/>
    <property type="project" value="UniProtKB"/>
</dbReference>
<dbReference type="GO" id="GO:0070062">
    <property type="term" value="C:extracellular exosome"/>
    <property type="evidence" value="ECO:0007005"/>
    <property type="project" value="UniProtKB"/>
</dbReference>
<dbReference type="GO" id="GO:0098978">
    <property type="term" value="C:glutamatergic synapse"/>
    <property type="evidence" value="ECO:0000314"/>
    <property type="project" value="SynGO"/>
</dbReference>
<dbReference type="GO" id="GO:0043231">
    <property type="term" value="C:intracellular membrane-bounded organelle"/>
    <property type="evidence" value="ECO:0000314"/>
    <property type="project" value="HPA"/>
</dbReference>
<dbReference type="GO" id="GO:0097708">
    <property type="term" value="C:intracellular vesicle"/>
    <property type="evidence" value="ECO:0000314"/>
    <property type="project" value="UniProtKB"/>
</dbReference>
<dbReference type="GO" id="GO:0044354">
    <property type="term" value="C:macropinosome"/>
    <property type="evidence" value="ECO:0000250"/>
    <property type="project" value="UniProtKB"/>
</dbReference>
<dbReference type="GO" id="GO:0016020">
    <property type="term" value="C:membrane"/>
    <property type="evidence" value="ECO:0000314"/>
    <property type="project" value="UniProtKB"/>
</dbReference>
<dbReference type="GO" id="GO:0005634">
    <property type="term" value="C:nucleus"/>
    <property type="evidence" value="ECO:0000314"/>
    <property type="project" value="UniProtKB"/>
</dbReference>
<dbReference type="GO" id="GO:0005886">
    <property type="term" value="C:plasma membrane"/>
    <property type="evidence" value="ECO:0000314"/>
    <property type="project" value="UniProtKB"/>
</dbReference>
<dbReference type="GO" id="GO:0001726">
    <property type="term" value="C:ruffle"/>
    <property type="evidence" value="ECO:0000250"/>
    <property type="project" value="UniProtKB"/>
</dbReference>
<dbReference type="GO" id="GO:0012506">
    <property type="term" value="C:vesicle membrane"/>
    <property type="evidence" value="ECO:0000314"/>
    <property type="project" value="BHF-UCL"/>
</dbReference>
<dbReference type="GO" id="GO:0048487">
    <property type="term" value="F:beta-tubulin binding"/>
    <property type="evidence" value="ECO:0000314"/>
    <property type="project" value="UniProtKB"/>
</dbReference>
<dbReference type="GO" id="GO:0042802">
    <property type="term" value="F:identical protein binding"/>
    <property type="evidence" value="ECO:0000353"/>
    <property type="project" value="IntAct"/>
</dbReference>
<dbReference type="GO" id="GO:0035091">
    <property type="term" value="F:phosphatidylinositol binding"/>
    <property type="evidence" value="ECO:0000314"/>
    <property type="project" value="UniProtKB"/>
</dbReference>
<dbReference type="GO" id="GO:0001786">
    <property type="term" value="F:phosphatidylserine binding"/>
    <property type="evidence" value="ECO:0000314"/>
    <property type="project" value="UniProtKB"/>
</dbReference>
<dbReference type="GO" id="GO:0042803">
    <property type="term" value="F:protein homodimerization activity"/>
    <property type="evidence" value="ECO:0000314"/>
    <property type="project" value="UniProtKB"/>
</dbReference>
<dbReference type="GO" id="GO:0043422">
    <property type="term" value="F:protein kinase B binding"/>
    <property type="evidence" value="ECO:0000353"/>
    <property type="project" value="BHF-UCL"/>
</dbReference>
<dbReference type="GO" id="GO:0044877">
    <property type="term" value="F:protein-containing complex binding"/>
    <property type="evidence" value="ECO:0000353"/>
    <property type="project" value="UniProtKB"/>
</dbReference>
<dbReference type="GO" id="GO:0033211">
    <property type="term" value="P:adiponectin-activated signaling pathway"/>
    <property type="evidence" value="ECO:0000315"/>
    <property type="project" value="UniProtKB"/>
</dbReference>
<dbReference type="GO" id="GO:0035729">
    <property type="term" value="P:cellular response to hepatocyte growth factor stimulus"/>
    <property type="evidence" value="ECO:0000250"/>
    <property type="project" value="UniProtKB"/>
</dbReference>
<dbReference type="GO" id="GO:0008286">
    <property type="term" value="P:insulin receptor signaling pathway"/>
    <property type="evidence" value="ECO:0000315"/>
    <property type="project" value="UniProtKB"/>
</dbReference>
<dbReference type="GO" id="GO:0099558">
    <property type="term" value="P:maintenance of synapse structure"/>
    <property type="evidence" value="ECO:0000314"/>
    <property type="project" value="SynGO"/>
</dbReference>
<dbReference type="GO" id="GO:1905450">
    <property type="term" value="P:negative regulation of Fc-gamma receptor signaling pathway involved in phagocytosis"/>
    <property type="evidence" value="ECO:0000250"/>
    <property type="project" value="UniProtKB"/>
</dbReference>
<dbReference type="GO" id="GO:1900017">
    <property type="term" value="P:positive regulation of cytokine production involved in inflammatory response"/>
    <property type="evidence" value="ECO:0000250"/>
    <property type="project" value="UniProtKB"/>
</dbReference>
<dbReference type="GO" id="GO:0046326">
    <property type="term" value="P:positive regulation of D-glucose import"/>
    <property type="evidence" value="ECO:0000315"/>
    <property type="project" value="UniProtKB"/>
</dbReference>
<dbReference type="GO" id="GO:1905303">
    <property type="term" value="P:positive regulation of macropinocytosis"/>
    <property type="evidence" value="ECO:0000250"/>
    <property type="project" value="UniProtKB"/>
</dbReference>
<dbReference type="GO" id="GO:0048023">
    <property type="term" value="P:positive regulation of melanin biosynthetic process"/>
    <property type="evidence" value="ECO:0000315"/>
    <property type="project" value="UniProtKB"/>
</dbReference>
<dbReference type="GO" id="GO:0006606">
    <property type="term" value="P:protein import into nucleus"/>
    <property type="evidence" value="ECO:0000314"/>
    <property type="project" value="UniProtKB"/>
</dbReference>
<dbReference type="GO" id="GO:0046324">
    <property type="term" value="P:regulation of D-glucose import"/>
    <property type="evidence" value="ECO:0000315"/>
    <property type="project" value="BHF-UCL"/>
</dbReference>
<dbReference type="GO" id="GO:0010762">
    <property type="term" value="P:regulation of fibroblast migration"/>
    <property type="evidence" value="ECO:0000250"/>
    <property type="project" value="UniProtKB"/>
</dbReference>
<dbReference type="GO" id="GO:2000045">
    <property type="term" value="P:regulation of G1/S transition of mitotic cell cycle"/>
    <property type="evidence" value="ECO:0000314"/>
    <property type="project" value="UniProtKB"/>
</dbReference>
<dbReference type="GO" id="GO:0045088">
    <property type="term" value="P:regulation of innate immune response"/>
    <property type="evidence" value="ECO:0000250"/>
    <property type="project" value="UniProtKB"/>
</dbReference>
<dbReference type="GO" id="GO:1903076">
    <property type="term" value="P:regulation of protein localization to plasma membrane"/>
    <property type="evidence" value="ECO:0000315"/>
    <property type="project" value="BHF-UCL"/>
</dbReference>
<dbReference type="GO" id="GO:0034143">
    <property type="term" value="P:regulation of toll-like receptor 4 signaling pathway"/>
    <property type="evidence" value="ECO:0000250"/>
    <property type="project" value="UniProtKB"/>
</dbReference>
<dbReference type="GO" id="GO:0007165">
    <property type="term" value="P:signal transduction"/>
    <property type="evidence" value="ECO:0000304"/>
    <property type="project" value="UniProtKB"/>
</dbReference>
<dbReference type="GO" id="GO:0023052">
    <property type="term" value="P:signaling"/>
    <property type="evidence" value="ECO:0000318"/>
    <property type="project" value="GO_Central"/>
</dbReference>
<dbReference type="GO" id="GO:0007179">
    <property type="term" value="P:transforming growth factor beta receptor signaling pathway"/>
    <property type="evidence" value="ECO:0000315"/>
    <property type="project" value="UniProtKB"/>
</dbReference>
<dbReference type="CDD" id="cd13247">
    <property type="entry name" value="BAR-PH_APPL"/>
    <property type="match status" value="1"/>
</dbReference>
<dbReference type="CDD" id="cd07631">
    <property type="entry name" value="BAR_APPL1"/>
    <property type="match status" value="1"/>
</dbReference>
<dbReference type="CDD" id="cd13158">
    <property type="entry name" value="PTB_APPL"/>
    <property type="match status" value="1"/>
</dbReference>
<dbReference type="FunFam" id="1.20.1270.60:FF:000034">
    <property type="entry name" value="DCC-interacting protein 13-alpha isoform X2"/>
    <property type="match status" value="1"/>
</dbReference>
<dbReference type="FunFam" id="2.30.29.30:FF:000178">
    <property type="entry name" value="DCC-interacting protein 13-alpha isoform X2"/>
    <property type="match status" value="1"/>
</dbReference>
<dbReference type="FunFam" id="2.30.29.30:FF:000067">
    <property type="entry name" value="Putative DCC-interacting protein 13-beta isoform 2"/>
    <property type="match status" value="1"/>
</dbReference>
<dbReference type="Gene3D" id="1.20.1270.60">
    <property type="entry name" value="Arfaptin homology (AH) domain/BAR domain"/>
    <property type="match status" value="1"/>
</dbReference>
<dbReference type="Gene3D" id="2.30.29.30">
    <property type="entry name" value="Pleckstrin-homology domain (PH domain)/Phosphotyrosine-binding domain (PTB)"/>
    <property type="match status" value="2"/>
</dbReference>
<dbReference type="InterPro" id="IPR027267">
    <property type="entry name" value="AH/BAR_dom_sf"/>
</dbReference>
<dbReference type="InterPro" id="IPR004148">
    <property type="entry name" value="BAR_dom"/>
</dbReference>
<dbReference type="InterPro" id="IPR047181">
    <property type="entry name" value="DP13A/B"/>
</dbReference>
<dbReference type="InterPro" id="IPR037929">
    <property type="entry name" value="DP13A_BAR"/>
</dbReference>
<dbReference type="InterPro" id="IPR011993">
    <property type="entry name" value="PH-like_dom_sf"/>
</dbReference>
<dbReference type="InterPro" id="IPR001849">
    <property type="entry name" value="PH_domain"/>
</dbReference>
<dbReference type="InterPro" id="IPR047236">
    <property type="entry name" value="PH_DP13A/B"/>
</dbReference>
<dbReference type="InterPro" id="IPR006020">
    <property type="entry name" value="PTB/PI_dom"/>
</dbReference>
<dbReference type="InterPro" id="IPR047237">
    <property type="entry name" value="PTB_APPL"/>
</dbReference>
<dbReference type="PANTHER" id="PTHR46415">
    <property type="entry name" value="ADAPTOR PROTEIN, PHOSPHOTYROSINE INTERACTION, PH DOMAIN AND LEUCINE ZIPPER-CONTAINING 2"/>
    <property type="match status" value="1"/>
</dbReference>
<dbReference type="PANTHER" id="PTHR46415:SF3">
    <property type="entry name" value="DCC-INTERACTING PROTEIN 13-ALPHA"/>
    <property type="match status" value="1"/>
</dbReference>
<dbReference type="Pfam" id="PF16746">
    <property type="entry name" value="BAR_3"/>
    <property type="match status" value="1"/>
</dbReference>
<dbReference type="Pfam" id="PF00169">
    <property type="entry name" value="PH"/>
    <property type="match status" value="1"/>
</dbReference>
<dbReference type="Pfam" id="PF00640">
    <property type="entry name" value="PID"/>
    <property type="match status" value="1"/>
</dbReference>
<dbReference type="SMART" id="SM00233">
    <property type="entry name" value="PH"/>
    <property type="match status" value="1"/>
</dbReference>
<dbReference type="SMART" id="SM00462">
    <property type="entry name" value="PTB"/>
    <property type="match status" value="1"/>
</dbReference>
<dbReference type="SUPFAM" id="SSF103657">
    <property type="entry name" value="BAR/IMD domain-like"/>
    <property type="match status" value="1"/>
</dbReference>
<dbReference type="SUPFAM" id="SSF50729">
    <property type="entry name" value="PH domain-like"/>
    <property type="match status" value="2"/>
</dbReference>
<dbReference type="PROSITE" id="PS50003">
    <property type="entry name" value="PH_DOMAIN"/>
    <property type="match status" value="1"/>
</dbReference>
<dbReference type="PROSITE" id="PS01179">
    <property type="entry name" value="PID"/>
    <property type="match status" value="1"/>
</dbReference>
<organism>
    <name type="scientific">Homo sapiens</name>
    <name type="common">Human</name>
    <dbReference type="NCBI Taxonomy" id="9606"/>
    <lineage>
        <taxon>Eukaryota</taxon>
        <taxon>Metazoa</taxon>
        <taxon>Chordata</taxon>
        <taxon>Craniata</taxon>
        <taxon>Vertebrata</taxon>
        <taxon>Euteleostomi</taxon>
        <taxon>Mammalia</taxon>
        <taxon>Eutheria</taxon>
        <taxon>Euarchontoglires</taxon>
        <taxon>Primates</taxon>
        <taxon>Haplorrhini</taxon>
        <taxon>Catarrhini</taxon>
        <taxon>Hominidae</taxon>
        <taxon>Homo</taxon>
    </lineage>
</organism>
<comment type="function">
    <text evidence="1 7 9 14 15 20 21 22">Multifunctional adapter protein that binds to various membrane receptors, nuclear factors and signaling proteins to regulate many processes, such as cell proliferation, immune response, endosomal trafficking and cell metabolism (PubMed:10490823, PubMed:15016378, PubMed:19661063, PubMed:26073777, PubMed:26583432). Regulates signaling pathway leading to cell proliferation through interaction with RAB5A and subunits of the NuRD/MeCP1 complex (PubMed:15016378). Functions as a positive regulator of innate immune response via activation of AKT1 signaling pathway by forming a complex with APPL1 and PIK3R1 (By similarity). Inhibits Fc-gamma receptor-mediated phagocytosis through PI3K/Akt signaling in macrophages (By similarity). Regulates TLR4 signaling in activated macrophages (By similarity). Involved in trafficking of the TGFBR1 from the endosomes to the nucleus via microtubules in a TRAF6-dependent manner (PubMed:26583432). Plays a role in cell metabolism by regulating adiponecting and insulin signaling pathways (PubMed:19661063, PubMed:24879834, PubMed:26073777). Required for fibroblast migration through HGF cell signaling (By similarity). Positive regulator of beta-catenin/TCF-dependent transcription through direct interaction with RUVBL2/reptin resulting in the relief of RUVBL2-mediated repression of beta-catenin/TCF target genes by modulating the interactions within the beta-catenin-reptin-HDAC complex (PubMed:19433865).</text>
</comment>
<comment type="subunit">
    <text evidence="1 7 8 9 11 12 13 14 15 16 17 18 19 22">Homodimer (PubMed:18034774). Binds RAB5A/Rab5 through an N-terminal domain. This interaction is essential for its recruitment to endosomal membranes as well as its role in cell proliferation (PubMed:15016378). Binds DCC and the catalytic domain of the inactive form of AKT2 through its PID domain (PubMed:10490823, PubMed:12011067). Binds PIK3CA and subunits of the NuRD/MeCP1 complex (PubMed:10490823, PubMed:15016378). Interacts with OCRL and INPP5B (PubMed:17765681, PubMed:20133602, PubMed:21233288, PubMed:21666675). Interacts with NTRK2 (By similarity). Interacts with APPL2; interaction is independent of follicle stimulating hormone stimulation; interaction is decreased by adiponectin in a time-dependent manner (PubMed:17030088, PubMed:18034774, PubMed:19661063). Forms a complex with APPL2 and RUVBL2 (PubMed:19433865). Forms a complex comprising APPL2, RUVBL2, CTNNB1, HDAC1 and HDAC2; interaction reduces interaction between CTNNB1, HDAC1, HDAC2 and RUVBL2 leading to the decrease of deacetylase activity of this complex; affects the recruitment of repressive complexes to the Wnt target genes (PubMed:19433865). Interacts with ANXA2 (PubMed:21645192). Interacts with TGFBR1; interaction is TGF beta dependent; mediates trafficking of the TGFBR1 from the endosomes to the nucleus via microtubules in a TRAF6-dependent manner (PubMed:26583432). Interacts with PRKCZ (PubMed:26583432). Interacts with PIK3R1 and APPL2 (By similarity). Interacts with ADIPOR1; ADIPOQ enhances this interaction; inhibites adiponectin-stimulated binding of APPL2 to ADIPOR1 (By similarity).</text>
</comment>
<comment type="interaction">
    <interactant intactId="EBI-741243">
        <id>Q9UKG1</id>
    </interactant>
    <interactant intactId="EBI-992807">
        <id>Q9BV57</id>
        <label>ADI1</label>
    </interactant>
    <organismsDiffer>false</organismsDiffer>
    <experiments>3</experiments>
</comment>
<comment type="interaction">
    <interactant intactId="EBI-741243">
        <id>Q9UKG1</id>
    </interactant>
    <interactant intactId="EBI-1632076">
        <id>Q96A54</id>
        <label>ADIPOR1</label>
    </interactant>
    <organismsDiffer>false</organismsDiffer>
    <experiments>6</experiments>
</comment>
<comment type="interaction">
    <interactant intactId="EBI-741243">
        <id>Q9UKG1</id>
    </interactant>
    <interactant intactId="EBI-741243">
        <id>Q9UKG1</id>
        <label>APPL1</label>
    </interactant>
    <organismsDiffer>false</organismsDiffer>
    <experiments>16</experiments>
</comment>
<comment type="interaction">
    <interactant intactId="EBI-741243">
        <id>Q9UKG1</id>
    </interactant>
    <interactant intactId="EBI-741261">
        <id>Q8NEU8</id>
        <label>APPL2</label>
    </interactant>
    <organismsDiffer>false</organismsDiffer>
    <experiments>23</experiments>
</comment>
<comment type="interaction">
    <interactant intactId="EBI-741243">
        <id>Q9UKG1</id>
    </interactant>
    <interactant intactId="EBI-310758">
        <id>Q03001</id>
        <label>DST</label>
    </interactant>
    <organismsDiffer>false</organismsDiffer>
    <experiments>3</experiments>
</comment>
<comment type="interaction">
    <interactant intactId="EBI-741243">
        <id>Q9UKG1</id>
    </interactant>
    <interactant intactId="EBI-297353">
        <id>P00533</id>
        <label>EGFR</label>
    </interactant>
    <organismsDiffer>false</organismsDiffer>
    <experiments>3</experiments>
</comment>
<comment type="interaction">
    <interactant intactId="EBI-741243">
        <id>Q9UKG1</id>
    </interactant>
    <interactant intactId="EBI-2513774">
        <id>O95363</id>
        <label>FARS2</label>
    </interactant>
    <organismsDiffer>false</organismsDiffer>
    <experiments>9</experiments>
</comment>
<comment type="interaction">
    <interactant intactId="EBI-741243">
        <id>Q9UKG1</id>
    </interactant>
    <interactant intactId="EBI-607682">
        <id>O15379</id>
        <label>HDAC3</label>
    </interactant>
    <organismsDiffer>false</organismsDiffer>
    <experiments>2</experiments>
</comment>
<comment type="interaction">
    <interactant intactId="EBI-741243">
        <id>Q9UKG1</id>
    </interactant>
    <interactant intactId="EBI-10209139">
        <id>P43362</id>
        <label>MAGEA9B</label>
    </interactant>
    <organismsDiffer>false</organismsDiffer>
    <experiments>5</experiments>
</comment>
<comment type="interaction">
    <interactant intactId="EBI-741243">
        <id>Q9UKG1</id>
    </interactant>
    <interactant intactId="EBI-2864512">
        <id>P50221</id>
        <label>MEOX1</label>
    </interactant>
    <organismsDiffer>false</organismsDiffer>
    <experiments>3</experiments>
</comment>
<comment type="interaction">
    <interactant intactId="EBI-741243">
        <id>Q9UKG1</id>
    </interactant>
    <interactant intactId="EBI-10171633">
        <id>Q96PV4</id>
        <label>PNMA5</label>
    </interactant>
    <organismsDiffer>false</organismsDiffer>
    <experiments>3</experiments>
</comment>
<comment type="interaction">
    <interactant intactId="EBI-741243">
        <id>Q9UKG1</id>
    </interactant>
    <interactant intactId="EBI-1056039">
        <id>Q9UL25</id>
        <label>RAB21</label>
    </interactant>
    <organismsDiffer>false</organismsDiffer>
    <experiments>10</experiments>
</comment>
<comment type="interaction">
    <interactant intactId="EBI-741243">
        <id>Q9UKG1</id>
    </interactant>
    <interactant intactId="EBI-399437">
        <id>P20339</id>
        <label>RAB5A</label>
    </interactant>
    <organismsDiffer>false</organismsDiffer>
    <experiments>23</experiments>
</comment>
<comment type="interaction">
    <interactant intactId="EBI-741243">
        <id>Q9UKG1</id>
    </interactant>
    <interactant intactId="EBI-746555">
        <id>Q8TAI7</id>
        <label>RHEBL1</label>
    </interactant>
    <organismsDiffer>false</organismsDiffer>
    <experiments>3</experiments>
</comment>
<comment type="interaction">
    <interactant intactId="EBI-741243">
        <id>Q9UKG1</id>
    </interactant>
    <interactant intactId="EBI-2107208">
        <id>Q9Y3I0</id>
        <label>RTCB</label>
    </interactant>
    <organismsDiffer>false</organismsDiffer>
    <experiments>3</experiments>
</comment>
<comment type="interaction">
    <interactant intactId="EBI-741243">
        <id>Q9UKG1</id>
    </interactant>
    <interactant intactId="EBI-2372294">
        <id>Q8WXH0</id>
        <label>SYNE2</label>
    </interactant>
    <organismsDiffer>false</organismsDiffer>
    <experiments>3</experiments>
</comment>
<comment type="interaction">
    <interactant intactId="EBI-741243">
        <id>Q9UKG1</id>
    </interactant>
    <interactant intactId="EBI-11952721">
        <id>Q05BL1</id>
        <label>TP53BP2</label>
    </interactant>
    <organismsDiffer>false</organismsDiffer>
    <experiments>3</experiments>
</comment>
<comment type="interaction">
    <interactant intactId="EBI-741243">
        <id>Q9UKG1</id>
    </interactant>
    <interactant intactId="EBI-355744">
        <id>Q12933</id>
        <label>TRAF2</label>
    </interactant>
    <organismsDiffer>false</organismsDiffer>
    <experiments>3</experiments>
</comment>
<comment type="interaction">
    <interactant intactId="EBI-741243">
        <id>Q9UKG1</id>
    </interactant>
    <interactant intactId="EBI-2339946">
        <id>Q9C0C9</id>
        <label>UBE2O</label>
    </interactant>
    <organismsDiffer>false</organismsDiffer>
    <experiments>6</experiments>
</comment>
<comment type="interaction">
    <interactant intactId="EBI-741243">
        <id>Q9UKG1</id>
    </interactant>
    <interactant intactId="EBI-3920997">
        <id>Q96NB3</id>
        <label>ZNF830</label>
    </interactant>
    <organismsDiffer>false</organismsDiffer>
    <experiments>2</experiments>
</comment>
<comment type="interaction">
    <interactant intactId="EBI-741243">
        <id>Q9UKG1</id>
    </interactant>
    <interactant intactId="EBI-992398">
        <id>Q91VH1</id>
        <label>Adipor1</label>
    </interactant>
    <organismsDiffer>true</organismsDiffer>
    <experiments>3</experiments>
</comment>
<comment type="subcellular location">
    <subcellularLocation>
        <location evidence="9 16 18">Early endosome membrane</location>
        <topology evidence="9">Peripheral membrane protein</topology>
    </subcellularLocation>
    <subcellularLocation>
        <location evidence="9 14 22">Nucleus</location>
    </subcellularLocation>
    <subcellularLocation>
        <location evidence="14 15">Cytoplasm</location>
    </subcellularLocation>
    <subcellularLocation>
        <location evidence="22">Endosome</location>
    </subcellularLocation>
    <subcellularLocation>
        <location evidence="1">Cell projection</location>
        <location evidence="1">Ruffle</location>
    </subcellularLocation>
    <subcellularLocation>
        <location evidence="1">Cytoplasmic vesicle</location>
        <location evidence="1">Phagosome</location>
    </subcellularLocation>
    <text evidence="9">Early endosomal membrane-bound and nuclear. Translocated into the nucleus upon release from endosomal membranes following internalization of EGF.</text>
</comment>
<comment type="tissue specificity">
    <text evidence="7">High levels in heart, ovary, pancreas and skeletal muscle.</text>
</comment>
<comment type="domain">
    <text evidence="9">Overexpression of an N-terminal domain (residues 1-319) or a C-terminal region (residues 273-709) has a proapoptotic effect.</text>
</comment>
<comment type="domain">
    <text evidence="19">The F&amp;H motif, an approximately 12-13 amino-acid sequence centered around Phe and His residues, is essential for binding to OCRL and INPP5B.</text>
</comment>
<comment type="PTM">
    <text evidence="12">Phosphorylation at Ser-410 by PKA severely impairs binding to OCRL.</text>
</comment>
<comment type="disease" evidence="21">
    <disease id="DI-04501">
        <name>Maturity-onset diabetes of the young 14</name>
        <acronym>MODY14</acronym>
        <description>A form of diabetes that is characterized by an autosomal dominant mode of inheritance, onset in childhood or early adulthood (usually before 25 years of age), a primary defect in insulin secretion and frequent insulin-independence at the beginning of the disease.</description>
        <dbReference type="MIM" id="616511"/>
    </disease>
    <text>The disease is caused by variants affecting the gene represented in this entry.</text>
</comment>
<gene>
    <name evidence="29" type="primary">APPL1</name>
    <name evidence="26" type="synonym">APPL</name>
    <name type="synonym">DIP13A</name>
    <name evidence="28" type="synonym">KIAA1428</name>
</gene>
<reference evidence="24 25" key="1">
    <citation type="journal article" date="1999" name="Oncogene">
        <title>Identification of a chromosome 3p14.3-21.1 gene, APPL, encoding an adaptor molecule that interacts with the oncoprotein-serine/threonine kinase AKT2.</title>
        <authorList>
            <person name="Mitsuuchi Y."/>
            <person name="Johnson S.W."/>
            <person name="Sonoda G."/>
            <person name="Tanno S."/>
            <person name="Golemis E.A."/>
            <person name="Testa J.R."/>
        </authorList>
    </citation>
    <scope>NUCLEOTIDE SEQUENCE [MRNA]</scope>
    <scope>FUNCTION</scope>
    <scope>TISSUE SPECIFICITY</scope>
    <scope>INTERACTION WITH AKT2 AND PIK3CA</scope>
</reference>
<reference evidence="24 27" key="2">
    <citation type="journal article" date="2002" name="J. Biol. Chem.">
        <title>Mediation of the DCC apoptotic signal by DIP13 alpha.</title>
        <authorList>
            <person name="Liu J."/>
            <person name="Yao F."/>
            <person name="Wu R."/>
            <person name="Morgan M."/>
            <person name="Thorburn A."/>
            <person name="Finley R.L. Jr."/>
            <person name="Chen Y.Q."/>
        </authorList>
    </citation>
    <scope>NUCLEOTIDE SEQUENCE [MRNA]</scope>
    <scope>INTERACTION WITH DCC</scope>
</reference>
<reference evidence="28" key="3">
    <citation type="journal article" date="2000" name="DNA Res.">
        <title>Prediction of the coding sequences of unidentified human genes. XVI. The complete sequences of 150 new cDNA clones from brain which code for large proteins in vitro.</title>
        <authorList>
            <person name="Nagase T."/>
            <person name="Kikuno R."/>
            <person name="Ishikawa K."/>
            <person name="Hirosawa M."/>
            <person name="Ohara O."/>
        </authorList>
    </citation>
    <scope>NUCLEOTIDE SEQUENCE [LARGE SCALE MRNA]</scope>
    <source>
        <tissue evidence="28">Brain</tissue>
    </source>
</reference>
<reference key="4">
    <citation type="journal article" date="2002" name="DNA Res.">
        <title>Construction of expression-ready cDNA clones for KIAA genes: manual curation of 330 KIAA cDNA clones.</title>
        <authorList>
            <person name="Nakajima D."/>
            <person name="Okazaki N."/>
            <person name="Yamakawa H."/>
            <person name="Kikuno R."/>
            <person name="Ohara O."/>
            <person name="Nagase T."/>
        </authorList>
    </citation>
    <scope>SEQUENCE REVISION</scope>
</reference>
<reference evidence="26" key="5">
    <citation type="journal article" date="2004" name="Genome Res.">
        <title>The status, quality, and expansion of the NIH full-length cDNA project: the Mammalian Gene Collection (MGC).</title>
        <authorList>
            <consortium name="The MGC Project Team"/>
        </authorList>
    </citation>
    <scope>NUCLEOTIDE SEQUENCE [LARGE SCALE MRNA]</scope>
    <source>
        <tissue evidence="26">Testis</tissue>
    </source>
</reference>
<reference evidence="24" key="6">
    <citation type="journal article" date="2004" name="Cell">
        <title>APPL proteins link Rab5 to nuclear signal transduction via an endosomal compartment.</title>
        <authorList>
            <person name="Miaczynska M."/>
            <person name="Christoforidis S."/>
            <person name="Giner A."/>
            <person name="Shevchenko A."/>
            <person name="Uttenweiler-Joseph S."/>
            <person name="Habermann B."/>
            <person name="Wilm M."/>
            <person name="Parton R.G."/>
            <person name="Zerial M."/>
        </authorList>
    </citation>
    <scope>FUNCTION</scope>
    <scope>SUBCELLULAR LOCATION</scope>
    <scope>INTERACTION WITH RAB5A AND NURD/MECP1 COMPLEX</scope>
    <scope>IDENTIFICATION BY MASS SPECTROMETRY</scope>
</reference>
<reference key="7">
    <citation type="journal article" date="2007" name="Dev. Cell">
        <title>A role of the Lowe syndrome protein OCRL in early steps of the endocytic pathway.</title>
        <authorList>
            <person name="Erdmann K.S."/>
            <person name="Mao Y."/>
            <person name="McCrea H.J."/>
            <person name="Zoncu R."/>
            <person name="Lee S."/>
            <person name="Paradise S."/>
            <person name="Modregger J."/>
            <person name="Biemesderfer D."/>
            <person name="Toomre D."/>
            <person name="De Camilli P."/>
        </authorList>
    </citation>
    <scope>INTERACTION WITH OCRL</scope>
    <scope>F&amp;H MOTIF</scope>
    <scope>PHOSPHORYLATION AT SER-410</scope>
    <scope>MUTAGENESIS OF SER-410</scope>
</reference>
<reference key="8">
    <citation type="journal article" date="2007" name="Mol. Cell. Endocrinol.">
        <title>APPL1, APPL2, Akt2 and FOXO1a interact with FSHR in a potential signaling complex.</title>
        <authorList>
            <person name="Nechamen C.A."/>
            <person name="Thomas R.M."/>
            <person name="Dias J.A."/>
        </authorList>
    </citation>
    <scope>INTERACTION WITH APPL2</scope>
</reference>
<reference key="9">
    <citation type="journal article" date="2007" name="Science">
        <title>ATM and ATR substrate analysis reveals extensive protein networks responsive to DNA damage.</title>
        <authorList>
            <person name="Matsuoka S."/>
            <person name="Ballif B.A."/>
            <person name="Smogorzewska A."/>
            <person name="McDonald E.R. III"/>
            <person name="Hurov K.E."/>
            <person name="Luo J."/>
            <person name="Bakalarski C.E."/>
            <person name="Zhao Z."/>
            <person name="Solimini N."/>
            <person name="Lerenthal Y."/>
            <person name="Shiloh Y."/>
            <person name="Gygi S.P."/>
            <person name="Elledge S.J."/>
        </authorList>
    </citation>
    <scope>IDENTIFICATION BY MASS SPECTROMETRY [LARGE SCALE ANALYSIS]</scope>
    <source>
        <tissue>Embryonic kidney</tissue>
    </source>
</reference>
<reference key="10">
    <citation type="journal article" date="2008" name="Proc. Natl. Acad. Sci. U.S.A.">
        <title>A quantitative atlas of mitotic phosphorylation.</title>
        <authorList>
            <person name="Dephoure N."/>
            <person name="Zhou C."/>
            <person name="Villen J."/>
            <person name="Beausoleil S.A."/>
            <person name="Bakalarski C.E."/>
            <person name="Elledge S.J."/>
            <person name="Gygi S.P."/>
        </authorList>
    </citation>
    <scope>PHOSPHORYLATION [LARGE SCALE ANALYSIS] AT THR-399</scope>
    <scope>IDENTIFICATION BY MASS SPECTROMETRY [LARGE SCALE ANALYSIS]</scope>
    <source>
        <tissue>Cervix carcinoma</tissue>
    </source>
</reference>
<reference key="11">
    <citation type="journal article" date="2008" name="Traffic">
        <title>Membrane targeting by APPL1 and APPL2: dynamic scaffolds that oligomerize and bind phosphoinositides.</title>
        <authorList>
            <person name="Chial H.J."/>
            <person name="Wu R."/>
            <person name="Ustach C.V."/>
            <person name="McPhail L.C."/>
            <person name="Mobley W.C."/>
            <person name="Chen Y.Q."/>
        </authorList>
    </citation>
    <scope>SUBUNIT</scope>
    <scope>INTERACTION WITH APPL2</scope>
    <scope>DOMAIN</scope>
    <scope>SUBCELLULAR LOCATION</scope>
</reference>
<reference key="12">
    <citation type="journal article" date="2009" name="J. Biol. Chem.">
        <title>Yin-Yang regulation of adiponectin signaling by APPL isoforms in muscle cells.</title>
        <authorList>
            <person name="Wang C."/>
            <person name="Xin X."/>
            <person name="Xiang R."/>
            <person name="Ramos F.J."/>
            <person name="Liu M."/>
            <person name="Lee H.J."/>
            <person name="Chen H."/>
            <person name="Mao X."/>
            <person name="Kikani C.K."/>
            <person name="Liu F."/>
            <person name="Dong L.Q."/>
        </authorList>
    </citation>
    <scope>FUNCTION</scope>
    <scope>INTERACTION WITH APPL2</scope>
</reference>
<reference key="13">
    <citation type="journal article" date="2009" name="Anal. Chem.">
        <title>Lys-N and trypsin cover complementary parts of the phosphoproteome in a refined SCX-based approach.</title>
        <authorList>
            <person name="Gauci S."/>
            <person name="Helbig A.O."/>
            <person name="Slijper M."/>
            <person name="Krijgsveld J."/>
            <person name="Heck A.J."/>
            <person name="Mohammed S."/>
        </authorList>
    </citation>
    <scope>IDENTIFICATION BY MASS SPECTROMETRY [LARGE SCALE ANALYSIS]</scope>
</reference>
<reference key="14">
    <citation type="journal article" date="2009" name="J. Biol. Chem.">
        <title>Endosomal adaptor proteins APPL1 and APPL2 are novel activators of beta-catenin/TCF-mediated transcription.</title>
        <authorList>
            <person name="Rashid S."/>
            <person name="Pilecka I."/>
            <person name="Torun A."/>
            <person name="Olchowik M."/>
            <person name="Bielinska B."/>
            <person name="Miaczynska M."/>
        </authorList>
    </citation>
    <scope>INTERACTION WITH RUVBL2; CTNNB1; APPL2; HDAC1 AND HDAC2</scope>
    <scope>FUNCTION</scope>
    <scope>SUBCELLULAR LOCATION</scope>
</reference>
<reference key="15">
    <citation type="journal article" date="2010" name="Proc. Natl. Acad. Sci. U.S.A.">
        <title>Two closely related endocytic proteins that share a common OCRL-binding motif with APPL1.</title>
        <authorList>
            <person name="Swan L.E."/>
            <person name="Tomasini L."/>
            <person name="Pirruccello M."/>
            <person name="Lunardi J."/>
            <person name="De Camilli P."/>
        </authorList>
    </citation>
    <scope>INTERACTION WITH OCRL</scope>
    <scope>SUBCELLULAR LOCATION</scope>
</reference>
<reference key="16">
    <citation type="journal article" date="2010" name="Sci. Signal.">
        <title>Quantitative phosphoproteomics reveals widespread full phosphorylation site occupancy during mitosis.</title>
        <authorList>
            <person name="Olsen J.V."/>
            <person name="Vermeulen M."/>
            <person name="Santamaria A."/>
            <person name="Kumar C."/>
            <person name="Miller M.L."/>
            <person name="Jensen L.J."/>
            <person name="Gnad F."/>
            <person name="Cox J."/>
            <person name="Jensen T.S."/>
            <person name="Nigg E.A."/>
            <person name="Brunak S."/>
            <person name="Mann M."/>
        </authorList>
    </citation>
    <scope>PHOSPHORYLATION [LARGE SCALE ANALYSIS] AT SER-401</scope>
    <scope>IDENTIFICATION BY MASS SPECTROMETRY [LARGE SCALE ANALYSIS]</scope>
    <source>
        <tissue>Cervix carcinoma</tissue>
    </source>
</reference>
<reference key="17">
    <citation type="journal article" date="2011" name="BMC Syst. Biol.">
        <title>Initial characterization of the human central proteome.</title>
        <authorList>
            <person name="Burkard T.R."/>
            <person name="Planyavsky M."/>
            <person name="Kaupe I."/>
            <person name="Breitwieser F.P."/>
            <person name="Buerckstuemmer T."/>
            <person name="Bennett K.L."/>
            <person name="Superti-Furga G."/>
            <person name="Colinge J."/>
        </authorList>
    </citation>
    <scope>IDENTIFICATION BY MASS SPECTROMETRY [LARGE SCALE ANALYSIS]</scope>
</reference>
<reference key="18">
    <citation type="journal article" date="2011" name="Mol. Biol. Cell">
        <title>The PH domain proteins IPIP27A and B link OCRL1 to receptor recycling in the endocytic pathway.</title>
        <authorList>
            <person name="Noakes C.J."/>
            <person name="Lee G."/>
            <person name="Lowe M."/>
        </authorList>
    </citation>
    <scope>INTERACTION WITH OCRL</scope>
</reference>
<reference key="19">
    <citation type="journal article" date="2011" name="Nat. Struct. Mol. Biol.">
        <title>Recognition of the F&amp;H motif by the Lowe syndrome protein OCRL.</title>
        <authorList>
            <person name="Pirruccello M."/>
            <person name="Swan L.E."/>
            <person name="Folta-Stogniew E."/>
            <person name="De Camilli P."/>
        </authorList>
    </citation>
    <scope>INTERACTION WITH OCRL AND INPP5B</scope>
    <scope>F&amp;H MOTIF</scope>
</reference>
<reference key="20">
    <citation type="journal article" date="2011" name="Traffic">
        <title>Biochemical characterization of APPL endosomes: the role of annexin A2 in APPL membrane recruitment.</title>
        <authorList>
            <person name="Urbanska A."/>
            <person name="Sadowski L."/>
            <person name="Kalaidzidis Y."/>
            <person name="Miaczynska M."/>
        </authorList>
    </citation>
    <scope>INTERACTION WITH ANXA2</scope>
    <scope>SUBCELLULAR LOCATION</scope>
</reference>
<reference key="21">
    <citation type="journal article" date="2012" name="Proc. Natl. Acad. Sci. U.S.A.">
        <title>N-terminal acetylome analyses and functional insights of the N-terminal acetyltransferase NatB.</title>
        <authorList>
            <person name="Van Damme P."/>
            <person name="Lasa M."/>
            <person name="Polevoda B."/>
            <person name="Gazquez C."/>
            <person name="Elosegui-Artola A."/>
            <person name="Kim D.S."/>
            <person name="De Juan-Pardo E."/>
            <person name="Demeyer K."/>
            <person name="Hole K."/>
            <person name="Larrea E."/>
            <person name="Timmerman E."/>
            <person name="Prieto J."/>
            <person name="Arnesen T."/>
            <person name="Sherman F."/>
            <person name="Gevaert K."/>
            <person name="Aldabe R."/>
        </authorList>
    </citation>
    <scope>IDENTIFICATION BY MASS SPECTROMETRY [LARGE SCALE ANALYSIS]</scope>
</reference>
<reference key="22">
    <citation type="journal article" date="2013" name="J. Proteome Res.">
        <title>Toward a comprehensive characterization of a human cancer cell phosphoproteome.</title>
        <authorList>
            <person name="Zhou H."/>
            <person name="Di Palma S."/>
            <person name="Preisinger C."/>
            <person name="Peng M."/>
            <person name="Polat A.N."/>
            <person name="Heck A.J."/>
            <person name="Mohammed S."/>
        </authorList>
    </citation>
    <scope>IDENTIFICATION BY MASS SPECTROMETRY [LARGE SCALE ANALYSIS]</scope>
    <source>
        <tissue>Cervix carcinoma</tissue>
        <tissue>Erythroleukemia</tissue>
    </source>
</reference>
<reference key="23">
    <citation type="journal article" date="2014" name="Diabetes">
        <title>The adaptor protein APPL2 inhibits insulin-stimulated glucose uptake by interacting with TBC1D1 in skeletal muscle.</title>
        <authorList>
            <person name="Cheng K.K."/>
            <person name="Zhu W."/>
            <person name="Chen B."/>
            <person name="Wang Y."/>
            <person name="Wu D."/>
            <person name="Sweeney G."/>
            <person name="Wang B."/>
            <person name="Lam K.S."/>
            <person name="Xu A."/>
        </authorList>
    </citation>
    <scope>FUNCTION</scope>
</reference>
<reference key="24">
    <citation type="journal article" date="2014" name="J. Proteomics">
        <title>An enzyme assisted RP-RPLC approach for in-depth analysis of human liver phosphoproteome.</title>
        <authorList>
            <person name="Bian Y."/>
            <person name="Song C."/>
            <person name="Cheng K."/>
            <person name="Dong M."/>
            <person name="Wang F."/>
            <person name="Huang J."/>
            <person name="Sun D."/>
            <person name="Wang L."/>
            <person name="Ye M."/>
            <person name="Zou H."/>
        </authorList>
    </citation>
    <scope>IDENTIFICATION BY MASS SPECTROMETRY [LARGE SCALE ANALYSIS]</scope>
    <source>
        <tissue>Liver</tissue>
    </source>
</reference>
<reference key="25">
    <citation type="journal article" date="2015" name="Am. J. Hum. Genet.">
        <title>Loss-of-function mutations in APPL1 in familial diabetes mellitus.</title>
        <authorList>
            <person name="Prudente S."/>
            <person name="Jungtrakoon P."/>
            <person name="Marucci A."/>
            <person name="Ludovico O."/>
            <person name="Buranasupkajorn P."/>
            <person name="Mazza T."/>
            <person name="Hastings T."/>
            <person name="Milano T."/>
            <person name="Morini E."/>
            <person name="Mercuri L."/>
            <person name="Bailetti D."/>
            <person name="Mendonca C."/>
            <person name="Alberico F."/>
            <person name="Basile G."/>
            <person name="Romani M."/>
            <person name="Miccinilli E."/>
            <person name="Pizzuti A."/>
            <person name="Carella M."/>
            <person name="Barbetti F."/>
            <person name="Pascarella S."/>
            <person name="Marchetti P."/>
            <person name="Trischitta V."/>
            <person name="Di Paola R."/>
            <person name="Doria A."/>
        </authorList>
    </citation>
    <scope>FUNCTION</scope>
    <scope>INVOLVEMENT IN MODY14</scope>
    <scope>VARIANT MODY14 ASN-94</scope>
    <scope>CHARACTERIZATION OF VARIANT MODY14 ASN-94</scope>
</reference>
<reference key="26">
    <citation type="journal article" date="2016" name="Oncotarget">
        <title>APPL proteins promote TGFbeta-induced nuclear transport of the TGFbeta type I receptor intracellular domain.</title>
        <authorList>
            <person name="Song J."/>
            <person name="Mu Y."/>
            <person name="Li C."/>
            <person name="Bergh A."/>
            <person name="Miaczynska M."/>
            <person name="Heldin C.H."/>
            <person name="Landstroem M."/>
        </authorList>
    </citation>
    <scope>INTERACTION WITH TGFBR1 AND PRKCZ</scope>
    <scope>SUBCELLULAR LOCATION</scope>
    <scope>FUNCTION</scope>
</reference>
<reference key="27">
    <citation type="journal article" date="2006" name="Science">
        <title>The consensus coding sequences of human breast and colorectal cancers.</title>
        <authorList>
            <person name="Sjoeblom T."/>
            <person name="Jones S."/>
            <person name="Wood L.D."/>
            <person name="Parsons D.W."/>
            <person name="Lin J."/>
            <person name="Barber T.D."/>
            <person name="Mandelker D."/>
            <person name="Leary R.J."/>
            <person name="Ptak J."/>
            <person name="Silliman N."/>
            <person name="Szabo S."/>
            <person name="Buckhaults P."/>
            <person name="Farrell C."/>
            <person name="Meeh P."/>
            <person name="Markowitz S.D."/>
            <person name="Willis J."/>
            <person name="Dawson D."/>
            <person name="Willson J.K.V."/>
            <person name="Gazdar A.F."/>
            <person name="Hartigan J."/>
            <person name="Wu L."/>
            <person name="Liu C."/>
            <person name="Parmigiani G."/>
            <person name="Park B.H."/>
            <person name="Bachman K.E."/>
            <person name="Papadopoulos N."/>
            <person name="Vogelstein B."/>
            <person name="Kinzler K.W."/>
            <person name="Velculescu V.E."/>
        </authorList>
    </citation>
    <scope>VARIANT [LARGE SCALE ANALYSIS] GLN-643</scope>
</reference>